<gene>
    <name evidence="1" type="primary">cobT</name>
    <name type="ordered locus">ECUMN_2327</name>
</gene>
<protein>
    <recommendedName>
        <fullName evidence="1">Nicotinate-nucleotide--dimethylbenzimidazole phosphoribosyltransferase</fullName>
        <shortName evidence="1">NN:DBI PRT</shortName>
        <ecNumber evidence="1">2.4.2.21</ecNumber>
    </recommendedName>
    <alternativeName>
        <fullName evidence="1">N(1)-alpha-phosphoribosyltransferase</fullName>
    </alternativeName>
</protein>
<accession>B7NC25</accession>
<dbReference type="EC" id="2.4.2.21" evidence="1"/>
<dbReference type="EMBL" id="CU928163">
    <property type="protein sequence ID" value="CAR13515.1"/>
    <property type="molecule type" value="Genomic_DNA"/>
</dbReference>
<dbReference type="RefSeq" id="WP_001193776.1">
    <property type="nucleotide sequence ID" value="NC_011751.1"/>
</dbReference>
<dbReference type="RefSeq" id="YP_002413043.1">
    <property type="nucleotide sequence ID" value="NC_011751.1"/>
</dbReference>
<dbReference type="SMR" id="B7NC25"/>
<dbReference type="STRING" id="585056.ECUMN_2327"/>
<dbReference type="KEGG" id="eum:ECUMN_2327"/>
<dbReference type="PATRIC" id="fig|585056.7.peg.2507"/>
<dbReference type="HOGENOM" id="CLU_002982_0_0_6"/>
<dbReference type="UniPathway" id="UPA00061">
    <property type="reaction ID" value="UER00516"/>
</dbReference>
<dbReference type="Proteomes" id="UP000007097">
    <property type="component" value="Chromosome"/>
</dbReference>
<dbReference type="GO" id="GO:0008939">
    <property type="term" value="F:nicotinate-nucleotide-dimethylbenzimidazole phosphoribosyltransferase activity"/>
    <property type="evidence" value="ECO:0007669"/>
    <property type="project" value="UniProtKB-UniRule"/>
</dbReference>
<dbReference type="GO" id="GO:0009236">
    <property type="term" value="P:cobalamin biosynthetic process"/>
    <property type="evidence" value="ECO:0007669"/>
    <property type="project" value="UniProtKB-KW"/>
</dbReference>
<dbReference type="CDD" id="cd02439">
    <property type="entry name" value="DMB-PRT_CobT"/>
    <property type="match status" value="1"/>
</dbReference>
<dbReference type="FunFam" id="1.10.1610.10:FF:000001">
    <property type="entry name" value="Nicotinate-nucleotide--dimethylbenzimidazole phosphoribosyltransferase"/>
    <property type="match status" value="1"/>
</dbReference>
<dbReference type="FunFam" id="3.40.50.10210:FF:000001">
    <property type="entry name" value="Nicotinate-nucleotide--dimethylbenzimidazole phosphoribosyltransferase"/>
    <property type="match status" value="1"/>
</dbReference>
<dbReference type="Gene3D" id="1.10.1610.10">
    <property type="match status" value="1"/>
</dbReference>
<dbReference type="Gene3D" id="3.40.50.10210">
    <property type="match status" value="1"/>
</dbReference>
<dbReference type="HAMAP" id="MF_00230">
    <property type="entry name" value="CobT"/>
    <property type="match status" value="1"/>
</dbReference>
<dbReference type="InterPro" id="IPR003200">
    <property type="entry name" value="Nict_dMeBzImd_PRibTrfase"/>
</dbReference>
<dbReference type="InterPro" id="IPR017846">
    <property type="entry name" value="Nict_dMeBzImd_PRibTrfase_bact"/>
</dbReference>
<dbReference type="InterPro" id="IPR023195">
    <property type="entry name" value="Nict_dMeBzImd_PRibTrfase_N"/>
</dbReference>
<dbReference type="InterPro" id="IPR036087">
    <property type="entry name" value="Nict_dMeBzImd_PRibTrfase_sf"/>
</dbReference>
<dbReference type="NCBIfam" id="TIGR03160">
    <property type="entry name" value="cobT_DBIPRT"/>
    <property type="match status" value="1"/>
</dbReference>
<dbReference type="NCBIfam" id="NF000996">
    <property type="entry name" value="PRK00105.1"/>
    <property type="match status" value="1"/>
</dbReference>
<dbReference type="PANTHER" id="PTHR43463">
    <property type="entry name" value="NICOTINATE-NUCLEOTIDE--DIMETHYLBENZIMIDAZOLE PHOSPHORIBOSYLTRANSFERASE"/>
    <property type="match status" value="1"/>
</dbReference>
<dbReference type="PANTHER" id="PTHR43463:SF1">
    <property type="entry name" value="NICOTINATE-NUCLEOTIDE--DIMETHYLBENZIMIDAZOLE PHOSPHORIBOSYLTRANSFERASE"/>
    <property type="match status" value="1"/>
</dbReference>
<dbReference type="Pfam" id="PF02277">
    <property type="entry name" value="DBI_PRT"/>
    <property type="match status" value="1"/>
</dbReference>
<dbReference type="SUPFAM" id="SSF52733">
    <property type="entry name" value="Nicotinate mononucleotide:5,6-dimethylbenzimidazole phosphoribosyltransferase (CobT)"/>
    <property type="match status" value="1"/>
</dbReference>
<comment type="function">
    <text evidence="1">Catalyzes the synthesis of alpha-ribazole-5'-phosphate from nicotinate mononucleotide (NAMN) and 5,6-dimethylbenzimidazole (DMB).</text>
</comment>
<comment type="catalytic activity">
    <reaction evidence="1">
        <text>5,6-dimethylbenzimidazole + nicotinate beta-D-ribonucleotide = alpha-ribazole 5'-phosphate + nicotinate + H(+)</text>
        <dbReference type="Rhea" id="RHEA:11196"/>
        <dbReference type="ChEBI" id="CHEBI:15378"/>
        <dbReference type="ChEBI" id="CHEBI:15890"/>
        <dbReference type="ChEBI" id="CHEBI:32544"/>
        <dbReference type="ChEBI" id="CHEBI:57502"/>
        <dbReference type="ChEBI" id="CHEBI:57918"/>
        <dbReference type="EC" id="2.4.2.21"/>
    </reaction>
</comment>
<comment type="pathway">
    <text evidence="1">Nucleoside biosynthesis; alpha-ribazole biosynthesis; alpha-ribazole from 5,6-dimethylbenzimidazole: step 1/2.</text>
</comment>
<comment type="subunit">
    <text evidence="1">Homodimer.</text>
</comment>
<comment type="similarity">
    <text evidence="1">Belongs to the CobT family.</text>
</comment>
<sequence>MQTLADLLNTIPAIDPAAMSRAQRHIDGLLKPVGSLGRLEALAIQLAGMPGLNGIPHVGKKAVLVMCADHGVWEEGVAISPKEVTAIQAENMTRGTTGVCVLAAQAGANVHVIDVGIDTAEPIPGLINMRVARGSGNIASAPAMSRRQAEKLLLDVICYTRELAKNGVTLFGVGELGMANTTPAAAIVSTITGRDPEEVVGIGANLPTDKLVNKIDVVRRAIMLNQPNPQDGVDVLAKVGGFDLVGMAGVMLGAASCGLPVLLDGFLSYAAALAACQMSPAIKPYLIPSHLSAEKGARIALSHLGLEPYLNMEMRLGEGSGAALAMPIIEAACAIYNNMGELAASNIVLPGNTTSDLNS</sequence>
<reference key="1">
    <citation type="journal article" date="2009" name="PLoS Genet.">
        <title>Organised genome dynamics in the Escherichia coli species results in highly diverse adaptive paths.</title>
        <authorList>
            <person name="Touchon M."/>
            <person name="Hoede C."/>
            <person name="Tenaillon O."/>
            <person name="Barbe V."/>
            <person name="Baeriswyl S."/>
            <person name="Bidet P."/>
            <person name="Bingen E."/>
            <person name="Bonacorsi S."/>
            <person name="Bouchier C."/>
            <person name="Bouvet O."/>
            <person name="Calteau A."/>
            <person name="Chiapello H."/>
            <person name="Clermont O."/>
            <person name="Cruveiller S."/>
            <person name="Danchin A."/>
            <person name="Diard M."/>
            <person name="Dossat C."/>
            <person name="Karoui M.E."/>
            <person name="Frapy E."/>
            <person name="Garry L."/>
            <person name="Ghigo J.M."/>
            <person name="Gilles A.M."/>
            <person name="Johnson J."/>
            <person name="Le Bouguenec C."/>
            <person name="Lescat M."/>
            <person name="Mangenot S."/>
            <person name="Martinez-Jehanne V."/>
            <person name="Matic I."/>
            <person name="Nassif X."/>
            <person name="Oztas S."/>
            <person name="Petit M.A."/>
            <person name="Pichon C."/>
            <person name="Rouy Z."/>
            <person name="Ruf C.S."/>
            <person name="Schneider D."/>
            <person name="Tourret J."/>
            <person name="Vacherie B."/>
            <person name="Vallenet D."/>
            <person name="Medigue C."/>
            <person name="Rocha E.P.C."/>
            <person name="Denamur E."/>
        </authorList>
    </citation>
    <scope>NUCLEOTIDE SEQUENCE [LARGE SCALE GENOMIC DNA]</scope>
    <source>
        <strain>UMN026 / ExPEC</strain>
    </source>
</reference>
<name>COBT_ECOLU</name>
<proteinExistence type="inferred from homology"/>
<evidence type="ECO:0000255" key="1">
    <source>
        <dbReference type="HAMAP-Rule" id="MF_00230"/>
    </source>
</evidence>
<organism>
    <name type="scientific">Escherichia coli O17:K52:H18 (strain UMN026 / ExPEC)</name>
    <dbReference type="NCBI Taxonomy" id="585056"/>
    <lineage>
        <taxon>Bacteria</taxon>
        <taxon>Pseudomonadati</taxon>
        <taxon>Pseudomonadota</taxon>
        <taxon>Gammaproteobacteria</taxon>
        <taxon>Enterobacterales</taxon>
        <taxon>Enterobacteriaceae</taxon>
        <taxon>Escherichia</taxon>
    </lineage>
</organism>
<feature type="chain" id="PRO_1000118965" description="Nicotinate-nucleotide--dimethylbenzimidazole phosphoribosyltransferase">
    <location>
        <begin position="1"/>
        <end position="359"/>
    </location>
</feature>
<feature type="active site" description="Proton acceptor" evidence="1">
    <location>
        <position position="318"/>
    </location>
</feature>
<keyword id="KW-0169">Cobalamin biosynthesis</keyword>
<keyword id="KW-0328">Glycosyltransferase</keyword>
<keyword id="KW-0808">Transferase</keyword>